<reference key="1">
    <citation type="journal article" date="2004" name="Genome Res.">
        <title>The status, quality, and expansion of the NIH full-length cDNA project: the Mammalian Gene Collection (MGC).</title>
        <authorList>
            <consortium name="The MGC Project Team"/>
        </authorList>
    </citation>
    <scope>NUCLEOTIDE SEQUENCE [LARGE SCALE MRNA]</scope>
    <source>
        <tissue>Brain</tissue>
    </source>
</reference>
<feature type="chain" id="PRO_0000248577" description="Deoxyhypusine hydroxylase">
    <location>
        <begin position="1"/>
        <end position="302"/>
    </location>
</feature>
<feature type="repeat" description="HEAT-like PBS-type 1">
    <location>
        <begin position="54"/>
        <end position="80"/>
    </location>
</feature>
<feature type="repeat" description="HEAT-like PBS-type 2">
    <location>
        <begin position="87"/>
        <end position="113"/>
    </location>
</feature>
<feature type="repeat" description="HEAT-like PBS-type 3">
    <location>
        <begin position="175"/>
        <end position="201"/>
    </location>
</feature>
<feature type="repeat" description="HEAT-like PBS-type 4">
    <location>
        <begin position="206"/>
        <end position="232"/>
    </location>
</feature>
<feature type="repeat" description="HEAT-like PBS-type 5">
    <location>
        <begin position="239"/>
        <end position="265"/>
    </location>
</feature>
<feature type="binding site" evidence="2 3">
    <location>
        <position position="56"/>
    </location>
    <ligand>
        <name>Fe cation</name>
        <dbReference type="ChEBI" id="CHEBI:24875"/>
        <label>1</label>
    </ligand>
</feature>
<feature type="binding site" evidence="2 3">
    <location>
        <position position="89"/>
    </location>
    <ligand>
        <name>Fe cation</name>
        <dbReference type="ChEBI" id="CHEBI:24875"/>
        <label>2</label>
    </ligand>
</feature>
<feature type="binding site" evidence="2 3">
    <location>
        <position position="90"/>
    </location>
    <ligand>
        <name>Fe cation</name>
        <dbReference type="ChEBI" id="CHEBI:24875"/>
        <label>2</label>
    </ligand>
</feature>
<feature type="binding site" evidence="2 3">
    <location>
        <position position="208"/>
    </location>
    <ligand>
        <name>Fe cation</name>
        <dbReference type="ChEBI" id="CHEBI:24875"/>
        <label>2</label>
    </ligand>
</feature>
<feature type="binding site" evidence="2 3">
    <location>
        <position position="241"/>
    </location>
    <ligand>
        <name>Fe cation</name>
        <dbReference type="ChEBI" id="CHEBI:24875"/>
        <label>1</label>
    </ligand>
</feature>
<feature type="binding site" evidence="2 3">
    <location>
        <position position="242"/>
    </location>
    <ligand>
        <name>Fe cation</name>
        <dbReference type="ChEBI" id="CHEBI:24875"/>
        <label>1</label>
    </ligand>
</feature>
<feature type="modified residue" description="N-acetylmethionine" evidence="2">
    <location>
        <position position="1"/>
    </location>
</feature>
<sequence length="302" mass="33077">MVTEQEVEAIGKTLVDSTQPLQARFRALFTLRGLGGPDAISWISRGFEDSSALLKHELAYCLGQMRDPRAIPVLVSVLQDRNQEPMVRHEAGEALGAIGNPKVLGLLKQYSTDPVVEVAETCQLAVRRLEWLQQHPGEATCAGPYLSVDPAPPAAEGDVGRLRETLLDEAQPLFERYRAMFALRNVGGKEAALALAEGLKCGSALFRHEVGYVLGQLQHEAAVSELAATLARTTESPMVRHECAEALGAIARPACLAALREYITDPERVVRESCEVALDMYEYENGQDFQYADGLERLRPPP</sequence>
<gene>
    <name type="primary">Dohh</name>
</gene>
<keyword id="KW-0007">Acetylation</keyword>
<keyword id="KW-0386">Hypusine biosynthesis</keyword>
<keyword id="KW-0408">Iron</keyword>
<keyword id="KW-0479">Metal-binding</keyword>
<keyword id="KW-0503">Monooxygenase</keyword>
<keyword id="KW-0560">Oxidoreductase</keyword>
<keyword id="KW-1185">Reference proteome</keyword>
<keyword id="KW-0677">Repeat</keyword>
<dbReference type="EC" id="1.14.99.29" evidence="2 3"/>
<dbReference type="EMBL" id="BC087658">
    <property type="protein sequence ID" value="AAH87658.1"/>
    <property type="molecule type" value="mRNA"/>
</dbReference>
<dbReference type="RefSeq" id="NP_001020177.1">
    <property type="nucleotide sequence ID" value="NM_001025006.2"/>
</dbReference>
<dbReference type="RefSeq" id="XP_006240999.1">
    <property type="nucleotide sequence ID" value="XM_006240937.2"/>
</dbReference>
<dbReference type="RefSeq" id="XP_006241000.1">
    <property type="nucleotide sequence ID" value="XM_006240938.2"/>
</dbReference>
<dbReference type="RefSeq" id="XP_006241001.1">
    <property type="nucleotide sequence ID" value="XM_006240939.2"/>
</dbReference>
<dbReference type="SMR" id="Q5PPJ4"/>
<dbReference type="BioGRID" id="260793">
    <property type="interactions" value="1"/>
</dbReference>
<dbReference type="FunCoup" id="Q5PPJ4">
    <property type="interactions" value="1828"/>
</dbReference>
<dbReference type="STRING" id="10116.ENSRNOP00000005640"/>
<dbReference type="PhosphoSitePlus" id="Q5PPJ4"/>
<dbReference type="jPOST" id="Q5PPJ4"/>
<dbReference type="PaxDb" id="10116-ENSRNOP00000005640"/>
<dbReference type="Ensembl" id="ENSRNOT00000112038.1">
    <property type="protein sequence ID" value="ENSRNOP00000093565.1"/>
    <property type="gene ID" value="ENSRNOG00000004259.7"/>
</dbReference>
<dbReference type="GeneID" id="314644"/>
<dbReference type="KEGG" id="rno:314644"/>
<dbReference type="UCSC" id="RGD:1304783">
    <property type="organism name" value="rat"/>
</dbReference>
<dbReference type="AGR" id="RGD:1304783"/>
<dbReference type="CTD" id="83475"/>
<dbReference type="RGD" id="1304783">
    <property type="gene designation" value="Dohh"/>
</dbReference>
<dbReference type="eggNOG" id="KOG0567">
    <property type="taxonomic scope" value="Eukaryota"/>
</dbReference>
<dbReference type="GeneTree" id="ENSGT00500000044957"/>
<dbReference type="HOGENOM" id="CLU_053974_0_0_1"/>
<dbReference type="InParanoid" id="Q5PPJ4"/>
<dbReference type="OMA" id="LQEPCSI"/>
<dbReference type="OrthoDB" id="421002at2759"/>
<dbReference type="PhylomeDB" id="Q5PPJ4"/>
<dbReference type="TreeFam" id="TF105626"/>
<dbReference type="Reactome" id="R-RNO-204626">
    <property type="pathway name" value="Hypusine synthesis from eIF5A-lysine"/>
</dbReference>
<dbReference type="UniPathway" id="UPA00354"/>
<dbReference type="PRO" id="PR:Q5PPJ4"/>
<dbReference type="Proteomes" id="UP000002494">
    <property type="component" value="Chromosome 7"/>
</dbReference>
<dbReference type="Bgee" id="ENSRNOG00000004259">
    <property type="expression patterns" value="Expressed in skeletal muscle tissue and 18 other cell types or tissues"/>
</dbReference>
<dbReference type="GO" id="GO:0019135">
    <property type="term" value="F:deoxyhypusine monooxygenase activity"/>
    <property type="evidence" value="ECO:0000250"/>
    <property type="project" value="UniProtKB"/>
</dbReference>
<dbReference type="GO" id="GO:0005506">
    <property type="term" value="F:iron ion binding"/>
    <property type="evidence" value="ECO:0000250"/>
    <property type="project" value="UniProtKB"/>
</dbReference>
<dbReference type="GO" id="GO:0008612">
    <property type="term" value="P:peptidyl-lysine modification to peptidyl-hypusine"/>
    <property type="evidence" value="ECO:0000250"/>
    <property type="project" value="UniProtKB"/>
</dbReference>
<dbReference type="FunFam" id="1.25.10.10:FF:000099">
    <property type="entry name" value="Deoxyhypusine hydroxylase"/>
    <property type="match status" value="2"/>
</dbReference>
<dbReference type="Gene3D" id="1.25.10.10">
    <property type="entry name" value="Leucine-rich Repeat Variant"/>
    <property type="match status" value="2"/>
</dbReference>
<dbReference type="HAMAP" id="MF_03101">
    <property type="entry name" value="Deoxyhypusine_hydroxylase"/>
    <property type="match status" value="1"/>
</dbReference>
<dbReference type="InterPro" id="IPR011989">
    <property type="entry name" value="ARM-like"/>
</dbReference>
<dbReference type="InterPro" id="IPR016024">
    <property type="entry name" value="ARM-type_fold"/>
</dbReference>
<dbReference type="InterPro" id="IPR027517">
    <property type="entry name" value="Deoxyhypusine_hydroxylase"/>
</dbReference>
<dbReference type="InterPro" id="IPR004155">
    <property type="entry name" value="PBS_lyase_HEAT"/>
</dbReference>
<dbReference type="PANTHER" id="PTHR12697:SF5">
    <property type="entry name" value="DEOXYHYPUSINE HYDROXYLASE"/>
    <property type="match status" value="1"/>
</dbReference>
<dbReference type="PANTHER" id="PTHR12697">
    <property type="entry name" value="PBS LYASE HEAT-LIKE PROTEIN"/>
    <property type="match status" value="1"/>
</dbReference>
<dbReference type="Pfam" id="PF13646">
    <property type="entry name" value="HEAT_2"/>
    <property type="match status" value="2"/>
</dbReference>
<dbReference type="SMART" id="SM00567">
    <property type="entry name" value="EZ_HEAT"/>
    <property type="match status" value="6"/>
</dbReference>
<dbReference type="SUPFAM" id="SSF48371">
    <property type="entry name" value="ARM repeat"/>
    <property type="match status" value="1"/>
</dbReference>
<protein>
    <recommendedName>
        <fullName evidence="3">Deoxyhypusine hydroxylase</fullName>
        <shortName evidence="3">DOHH</shortName>
        <ecNumber evidence="2 3">1.14.99.29</ecNumber>
    </recommendedName>
    <alternativeName>
        <fullName evidence="3">Deoxyhypusine dioxygenase</fullName>
    </alternativeName>
    <alternativeName>
        <fullName evidence="3">Deoxyhypusine monooxygenase</fullName>
    </alternativeName>
</protein>
<proteinExistence type="evidence at transcript level"/>
<accession>Q5PPJ4</accession>
<name>DOHH_RAT</name>
<evidence type="ECO:0000250" key="1">
    <source>
        <dbReference type="UniProtKB" id="Q99LN9"/>
    </source>
</evidence>
<evidence type="ECO:0000250" key="2">
    <source>
        <dbReference type="UniProtKB" id="Q9BU89"/>
    </source>
</evidence>
<evidence type="ECO:0000255" key="3">
    <source>
        <dbReference type="HAMAP-Rule" id="MF_03101"/>
    </source>
</evidence>
<comment type="function">
    <text evidence="1 3">Catalyzes the hydroxylation of the N(6)-(4-aminobutyl)-L-lysine intermediate produced by deoxyhypusine synthase/DHPS on a critical lysine of the eukaryotic translation initiation factor 5A/eIF-5A. This is the second step of the post-translational modification of that lysine into an unusual amino acid residue named hypusine. Hypusination is unique to mature eIF-5A factor and is essential for its function.</text>
</comment>
<comment type="catalytic activity">
    <reaction evidence="2 3">
        <text>[eIF5A protein]-deoxyhypusine + AH2 + O2 = [eIF5A protein]-hypusine + A + H2O</text>
        <dbReference type="Rhea" id="RHEA:14101"/>
        <dbReference type="Rhea" id="RHEA-COMP:10144"/>
        <dbReference type="Rhea" id="RHEA-COMP:12592"/>
        <dbReference type="ChEBI" id="CHEBI:13193"/>
        <dbReference type="ChEBI" id="CHEBI:15377"/>
        <dbReference type="ChEBI" id="CHEBI:15379"/>
        <dbReference type="ChEBI" id="CHEBI:17499"/>
        <dbReference type="ChEBI" id="CHEBI:82657"/>
        <dbReference type="ChEBI" id="CHEBI:91175"/>
        <dbReference type="EC" id="1.14.99.29"/>
    </reaction>
</comment>
<comment type="cofactor">
    <cofactor evidence="2 3">
        <name>Fe(2+)</name>
        <dbReference type="ChEBI" id="CHEBI:29033"/>
    </cofactor>
    <text evidence="2 3">Binds 2 Fe(2+) ions per subunit.</text>
</comment>
<comment type="pathway">
    <text evidence="2 3">Protein modification; eIF5A hypusination.</text>
</comment>
<comment type="similarity">
    <text evidence="3">Belongs to the deoxyhypusine hydroxylase family.</text>
</comment>
<organism>
    <name type="scientific">Rattus norvegicus</name>
    <name type="common">Rat</name>
    <dbReference type="NCBI Taxonomy" id="10116"/>
    <lineage>
        <taxon>Eukaryota</taxon>
        <taxon>Metazoa</taxon>
        <taxon>Chordata</taxon>
        <taxon>Craniata</taxon>
        <taxon>Vertebrata</taxon>
        <taxon>Euteleostomi</taxon>
        <taxon>Mammalia</taxon>
        <taxon>Eutheria</taxon>
        <taxon>Euarchontoglires</taxon>
        <taxon>Glires</taxon>
        <taxon>Rodentia</taxon>
        <taxon>Myomorpha</taxon>
        <taxon>Muroidea</taxon>
        <taxon>Muridae</taxon>
        <taxon>Murinae</taxon>
        <taxon>Rattus</taxon>
    </lineage>
</organism>